<protein>
    <recommendedName>
        <fullName>Uncharacterized isochorismatase family protein YwoC</fullName>
        <ecNumber>3.-.-.-</ecNumber>
    </recommendedName>
</protein>
<comment type="similarity">
    <text evidence="1">Belongs to the isochorismatase family.</text>
</comment>
<sequence length="189" mass="21088">MMNTLNIDFQKTALVIIDLQKGIVPIDQSGQVVPNAKKLVDEFRKHNGFISFVNVAFHDGADALKPQTDEPAQGGSGEMPADWAEFVPEIGVQDGDYTVTKRQWGAFFGTDLDLQLRRRGIDTIVLCGIATNIGVESTAREAFQLGYQQIFITDAMSTFSDEEHEATLRFIFPRIGKSRTTEEFLEQVK</sequence>
<reference key="1">
    <citation type="journal article" date="1997" name="Microbiology">
        <title>The Bacillus subtilis genome from gerBC (311 degrees) to licR (334 degrees).</title>
        <authorList>
            <person name="Presecan E."/>
            <person name="Moszer I."/>
            <person name="Boursier L."/>
            <person name="Cruz Ramos H."/>
            <person name="De La Fuente V."/>
            <person name="Hullo M.-F."/>
            <person name="Lelong C."/>
            <person name="Schleich S."/>
            <person name="Sekowska A."/>
            <person name="Song B.H."/>
            <person name="Villani G."/>
            <person name="Kunst F."/>
            <person name="Danchin A."/>
            <person name="Glaser P."/>
        </authorList>
    </citation>
    <scope>NUCLEOTIDE SEQUENCE [GENOMIC DNA]</scope>
    <source>
        <strain>168</strain>
    </source>
</reference>
<reference key="2">
    <citation type="journal article" date="1997" name="Nature">
        <title>The complete genome sequence of the Gram-positive bacterium Bacillus subtilis.</title>
        <authorList>
            <person name="Kunst F."/>
            <person name="Ogasawara N."/>
            <person name="Moszer I."/>
            <person name="Albertini A.M."/>
            <person name="Alloni G."/>
            <person name="Azevedo V."/>
            <person name="Bertero M.G."/>
            <person name="Bessieres P."/>
            <person name="Bolotin A."/>
            <person name="Borchert S."/>
            <person name="Borriss R."/>
            <person name="Boursier L."/>
            <person name="Brans A."/>
            <person name="Braun M."/>
            <person name="Brignell S.C."/>
            <person name="Bron S."/>
            <person name="Brouillet S."/>
            <person name="Bruschi C.V."/>
            <person name="Caldwell B."/>
            <person name="Capuano V."/>
            <person name="Carter N.M."/>
            <person name="Choi S.-K."/>
            <person name="Codani J.-J."/>
            <person name="Connerton I.F."/>
            <person name="Cummings N.J."/>
            <person name="Daniel R.A."/>
            <person name="Denizot F."/>
            <person name="Devine K.M."/>
            <person name="Duesterhoeft A."/>
            <person name="Ehrlich S.D."/>
            <person name="Emmerson P.T."/>
            <person name="Entian K.-D."/>
            <person name="Errington J."/>
            <person name="Fabret C."/>
            <person name="Ferrari E."/>
            <person name="Foulger D."/>
            <person name="Fritz C."/>
            <person name="Fujita M."/>
            <person name="Fujita Y."/>
            <person name="Fuma S."/>
            <person name="Galizzi A."/>
            <person name="Galleron N."/>
            <person name="Ghim S.-Y."/>
            <person name="Glaser P."/>
            <person name="Goffeau A."/>
            <person name="Golightly E.J."/>
            <person name="Grandi G."/>
            <person name="Guiseppi G."/>
            <person name="Guy B.J."/>
            <person name="Haga K."/>
            <person name="Haiech J."/>
            <person name="Harwood C.R."/>
            <person name="Henaut A."/>
            <person name="Hilbert H."/>
            <person name="Holsappel S."/>
            <person name="Hosono S."/>
            <person name="Hullo M.-F."/>
            <person name="Itaya M."/>
            <person name="Jones L.-M."/>
            <person name="Joris B."/>
            <person name="Karamata D."/>
            <person name="Kasahara Y."/>
            <person name="Klaerr-Blanchard M."/>
            <person name="Klein C."/>
            <person name="Kobayashi Y."/>
            <person name="Koetter P."/>
            <person name="Koningstein G."/>
            <person name="Krogh S."/>
            <person name="Kumano M."/>
            <person name="Kurita K."/>
            <person name="Lapidus A."/>
            <person name="Lardinois S."/>
            <person name="Lauber J."/>
            <person name="Lazarevic V."/>
            <person name="Lee S.-M."/>
            <person name="Levine A."/>
            <person name="Liu H."/>
            <person name="Masuda S."/>
            <person name="Mauel C."/>
            <person name="Medigue C."/>
            <person name="Medina N."/>
            <person name="Mellado R.P."/>
            <person name="Mizuno M."/>
            <person name="Moestl D."/>
            <person name="Nakai S."/>
            <person name="Noback M."/>
            <person name="Noone D."/>
            <person name="O'Reilly M."/>
            <person name="Ogawa K."/>
            <person name="Ogiwara A."/>
            <person name="Oudega B."/>
            <person name="Park S.-H."/>
            <person name="Parro V."/>
            <person name="Pohl T.M."/>
            <person name="Portetelle D."/>
            <person name="Porwollik S."/>
            <person name="Prescott A.M."/>
            <person name="Presecan E."/>
            <person name="Pujic P."/>
            <person name="Purnelle B."/>
            <person name="Rapoport G."/>
            <person name="Rey M."/>
            <person name="Reynolds S."/>
            <person name="Rieger M."/>
            <person name="Rivolta C."/>
            <person name="Rocha E."/>
            <person name="Roche B."/>
            <person name="Rose M."/>
            <person name="Sadaie Y."/>
            <person name="Sato T."/>
            <person name="Scanlan E."/>
            <person name="Schleich S."/>
            <person name="Schroeter R."/>
            <person name="Scoffone F."/>
            <person name="Sekiguchi J."/>
            <person name="Sekowska A."/>
            <person name="Seror S.J."/>
            <person name="Serror P."/>
            <person name="Shin B.-S."/>
            <person name="Soldo B."/>
            <person name="Sorokin A."/>
            <person name="Tacconi E."/>
            <person name="Takagi T."/>
            <person name="Takahashi H."/>
            <person name="Takemaru K."/>
            <person name="Takeuchi M."/>
            <person name="Tamakoshi A."/>
            <person name="Tanaka T."/>
            <person name="Terpstra P."/>
            <person name="Tognoni A."/>
            <person name="Tosato V."/>
            <person name="Uchiyama S."/>
            <person name="Vandenbol M."/>
            <person name="Vannier F."/>
            <person name="Vassarotti A."/>
            <person name="Viari A."/>
            <person name="Wambutt R."/>
            <person name="Wedler E."/>
            <person name="Wedler H."/>
            <person name="Weitzenegger T."/>
            <person name="Winters P."/>
            <person name="Wipat A."/>
            <person name="Yamamoto H."/>
            <person name="Yamane K."/>
            <person name="Yasumoto K."/>
            <person name="Yata K."/>
            <person name="Yoshida K."/>
            <person name="Yoshikawa H.-F."/>
            <person name="Zumstein E."/>
            <person name="Yoshikawa H."/>
            <person name="Danchin A."/>
        </authorList>
    </citation>
    <scope>NUCLEOTIDE SEQUENCE [LARGE SCALE GENOMIC DNA]</scope>
    <source>
        <strain>168</strain>
    </source>
</reference>
<reference key="3">
    <citation type="journal article" date="2009" name="Microbiology">
        <title>From a consortium sequence to a unified sequence: the Bacillus subtilis 168 reference genome a decade later.</title>
        <authorList>
            <person name="Barbe V."/>
            <person name="Cruveiller S."/>
            <person name="Kunst F."/>
            <person name="Lenoble P."/>
            <person name="Meurice G."/>
            <person name="Sekowska A."/>
            <person name="Vallenet D."/>
            <person name="Wang T."/>
            <person name="Moszer I."/>
            <person name="Medigue C."/>
            <person name="Danchin A."/>
        </authorList>
    </citation>
    <scope>SEQUENCE REVISION TO 149</scope>
</reference>
<keyword id="KW-0378">Hydrolase</keyword>
<keyword id="KW-1185">Reference proteome</keyword>
<feature type="chain" id="PRO_0000201829" description="Uncharacterized isochorismatase family protein YwoC">
    <location>
        <begin position="1"/>
        <end position="189"/>
    </location>
</feature>
<feature type="sequence conflict" description="In Ref. 1; CAB05376." evidence="1" ref="1">
    <original>Q</original>
    <variation>R</variation>
    <location>
        <position position="149"/>
    </location>
</feature>
<proteinExistence type="inferred from homology"/>
<evidence type="ECO:0000305" key="1"/>
<gene>
    <name type="primary">ywoC</name>
    <name type="ordered locus">BSU36490</name>
</gene>
<organism>
    <name type="scientific">Bacillus subtilis (strain 168)</name>
    <dbReference type="NCBI Taxonomy" id="224308"/>
    <lineage>
        <taxon>Bacteria</taxon>
        <taxon>Bacillati</taxon>
        <taxon>Bacillota</taxon>
        <taxon>Bacilli</taxon>
        <taxon>Bacillales</taxon>
        <taxon>Bacillaceae</taxon>
        <taxon>Bacillus</taxon>
    </lineage>
</organism>
<name>YWOC_BACSU</name>
<accession>P94573</accession>
<dbReference type="EC" id="3.-.-.-"/>
<dbReference type="EMBL" id="Z82987">
    <property type="protein sequence ID" value="CAB05376.1"/>
    <property type="molecule type" value="Genomic_DNA"/>
</dbReference>
<dbReference type="EMBL" id="AL009126">
    <property type="protein sequence ID" value="CAB15666.2"/>
    <property type="molecule type" value="Genomic_DNA"/>
</dbReference>
<dbReference type="PIR" id="F70064">
    <property type="entry name" value="F70064"/>
</dbReference>
<dbReference type="RefSeq" id="NP_391530.2">
    <property type="nucleotide sequence ID" value="NC_000964.3"/>
</dbReference>
<dbReference type="RefSeq" id="WP_003227761.1">
    <property type="nucleotide sequence ID" value="NZ_OZ025638.1"/>
</dbReference>
<dbReference type="SMR" id="P94573"/>
<dbReference type="FunCoup" id="P94573">
    <property type="interactions" value="92"/>
</dbReference>
<dbReference type="STRING" id="224308.BSU36490"/>
<dbReference type="PaxDb" id="224308-BSU36490"/>
<dbReference type="EnsemblBacteria" id="CAB15666">
    <property type="protein sequence ID" value="CAB15666"/>
    <property type="gene ID" value="BSU_36490"/>
</dbReference>
<dbReference type="GeneID" id="936934"/>
<dbReference type="KEGG" id="bsu:BSU36490"/>
<dbReference type="PATRIC" id="fig|224308.179.peg.3948"/>
<dbReference type="eggNOG" id="COG1335">
    <property type="taxonomic scope" value="Bacteria"/>
</dbReference>
<dbReference type="InParanoid" id="P94573"/>
<dbReference type="OrthoDB" id="257098at2"/>
<dbReference type="PhylomeDB" id="P94573"/>
<dbReference type="BioCyc" id="BSUB:BSU36490-MONOMER"/>
<dbReference type="Proteomes" id="UP000001570">
    <property type="component" value="Chromosome"/>
</dbReference>
<dbReference type="GO" id="GO:0008908">
    <property type="term" value="F:isochorismatase activity"/>
    <property type="evidence" value="ECO:0007669"/>
    <property type="project" value="InterPro"/>
</dbReference>
<dbReference type="CDD" id="cd00431">
    <property type="entry name" value="cysteine_hydrolases"/>
    <property type="match status" value="1"/>
</dbReference>
<dbReference type="FunFam" id="3.40.50.850:FF:000005">
    <property type="entry name" value="Isochorismatase hydrolase"/>
    <property type="match status" value="1"/>
</dbReference>
<dbReference type="Gene3D" id="3.40.50.850">
    <property type="entry name" value="Isochorismatase-like"/>
    <property type="match status" value="1"/>
</dbReference>
<dbReference type="InterPro" id="IPR016291">
    <property type="entry name" value="Isochorismatase"/>
</dbReference>
<dbReference type="InterPro" id="IPR000868">
    <property type="entry name" value="Isochorismatase-like_dom"/>
</dbReference>
<dbReference type="InterPro" id="IPR050272">
    <property type="entry name" value="Isochorismatase-like_hydrls"/>
</dbReference>
<dbReference type="InterPro" id="IPR036380">
    <property type="entry name" value="Isochorismatase-like_sf"/>
</dbReference>
<dbReference type="NCBIfam" id="NF008517">
    <property type="entry name" value="PRK11440.1"/>
    <property type="match status" value="1"/>
</dbReference>
<dbReference type="PANTHER" id="PTHR43540:SF7">
    <property type="entry name" value="ISOCHORISMATASE FAMILY PROTEIN YECD"/>
    <property type="match status" value="1"/>
</dbReference>
<dbReference type="PANTHER" id="PTHR43540">
    <property type="entry name" value="PEROXYUREIDOACRYLATE/UREIDOACRYLATE AMIDOHYDROLASE-RELATED"/>
    <property type="match status" value="1"/>
</dbReference>
<dbReference type="Pfam" id="PF00857">
    <property type="entry name" value="Isochorismatase"/>
    <property type="match status" value="1"/>
</dbReference>
<dbReference type="PRINTS" id="PR01398">
    <property type="entry name" value="ISCHRISMTASE"/>
</dbReference>
<dbReference type="SUPFAM" id="SSF52499">
    <property type="entry name" value="Isochorismatase-like hydrolases"/>
    <property type="match status" value="1"/>
</dbReference>